<organism>
    <name type="scientific">Actinobacillus pleuropneumoniae serotype 7 (strain AP76)</name>
    <dbReference type="NCBI Taxonomy" id="537457"/>
    <lineage>
        <taxon>Bacteria</taxon>
        <taxon>Pseudomonadati</taxon>
        <taxon>Pseudomonadota</taxon>
        <taxon>Gammaproteobacteria</taxon>
        <taxon>Pasteurellales</taxon>
        <taxon>Pasteurellaceae</taxon>
        <taxon>Actinobacillus</taxon>
    </lineage>
</organism>
<reference key="1">
    <citation type="submission" date="2008-06" db="EMBL/GenBank/DDBJ databases">
        <title>Genome and proteome analysis of A. pleuropneumoniae serotype 7.</title>
        <authorList>
            <person name="Linke B."/>
            <person name="Buettner F."/>
            <person name="Martinez-Arias R."/>
            <person name="Goesmann A."/>
            <person name="Baltes N."/>
            <person name="Tegetmeyer H."/>
            <person name="Singh M."/>
            <person name="Gerlach G.F."/>
        </authorList>
    </citation>
    <scope>NUCLEOTIDE SEQUENCE [LARGE SCALE GENOMIC DNA]</scope>
    <source>
        <strain>AP76</strain>
    </source>
</reference>
<dbReference type="EMBL" id="CP001091">
    <property type="protein sequence ID" value="ACE61853.1"/>
    <property type="molecule type" value="Genomic_DNA"/>
</dbReference>
<dbReference type="RefSeq" id="WP_005601625.1">
    <property type="nucleotide sequence ID" value="NC_010939.1"/>
</dbReference>
<dbReference type="SMR" id="B3GY30"/>
<dbReference type="KEGG" id="apa:APP7_1201"/>
<dbReference type="HOGENOM" id="CLU_066607_3_2_6"/>
<dbReference type="Proteomes" id="UP000001226">
    <property type="component" value="Chromosome"/>
</dbReference>
<dbReference type="GO" id="GO:0005737">
    <property type="term" value="C:cytoplasm"/>
    <property type="evidence" value="ECO:0007669"/>
    <property type="project" value="UniProtKB-SubCell"/>
</dbReference>
<dbReference type="GO" id="GO:0006282">
    <property type="term" value="P:regulation of DNA repair"/>
    <property type="evidence" value="ECO:0007669"/>
    <property type="project" value="UniProtKB-UniRule"/>
</dbReference>
<dbReference type="Gene3D" id="1.10.10.10">
    <property type="entry name" value="Winged helix-like DNA-binding domain superfamily/Winged helix DNA-binding domain"/>
    <property type="match status" value="3"/>
</dbReference>
<dbReference type="HAMAP" id="MF_01114">
    <property type="entry name" value="RecX"/>
    <property type="match status" value="1"/>
</dbReference>
<dbReference type="InterPro" id="IPR053926">
    <property type="entry name" value="RecX_HTH_1st"/>
</dbReference>
<dbReference type="InterPro" id="IPR053924">
    <property type="entry name" value="RecX_HTH_2nd"/>
</dbReference>
<dbReference type="InterPro" id="IPR003783">
    <property type="entry name" value="Regulatory_RecX"/>
</dbReference>
<dbReference type="InterPro" id="IPR036388">
    <property type="entry name" value="WH-like_DNA-bd_sf"/>
</dbReference>
<dbReference type="NCBIfam" id="NF001057">
    <property type="entry name" value="PRK00117.3-3"/>
    <property type="match status" value="1"/>
</dbReference>
<dbReference type="PANTHER" id="PTHR33602">
    <property type="entry name" value="REGULATORY PROTEIN RECX FAMILY PROTEIN"/>
    <property type="match status" value="1"/>
</dbReference>
<dbReference type="PANTHER" id="PTHR33602:SF1">
    <property type="entry name" value="REGULATORY PROTEIN RECX FAMILY PROTEIN"/>
    <property type="match status" value="1"/>
</dbReference>
<dbReference type="Pfam" id="PF21982">
    <property type="entry name" value="RecX_HTH1"/>
    <property type="match status" value="1"/>
</dbReference>
<dbReference type="Pfam" id="PF02631">
    <property type="entry name" value="RecX_HTH2"/>
    <property type="match status" value="1"/>
</dbReference>
<protein>
    <recommendedName>
        <fullName evidence="1">Regulatory protein RecX</fullName>
    </recommendedName>
</protein>
<feature type="chain" id="PRO_1000137150" description="Regulatory protein RecX">
    <location>
        <begin position="1"/>
        <end position="151"/>
    </location>
</feature>
<sequence>MTNYTAINYLLYLLSKRDYSEQDLRRKLVQKEYSQEEIEQAIERAQANNWQSDERYCAGFIRYRSQQGIGPRRLKQELKLKGIKDWLINQELENAEIDWFILAEQVFEKKRPQVWDIKAKQKMWRFMLSRGFYNDHFSHLMDIDYNDTEYE</sequence>
<proteinExistence type="inferred from homology"/>
<accession>B3GY30</accession>
<name>RECX_ACTP7</name>
<evidence type="ECO:0000255" key="1">
    <source>
        <dbReference type="HAMAP-Rule" id="MF_01114"/>
    </source>
</evidence>
<keyword id="KW-0963">Cytoplasm</keyword>
<gene>
    <name evidence="1" type="primary">recX</name>
    <name type="ordered locus">APP7_1201</name>
</gene>
<comment type="function">
    <text evidence="1">Modulates RecA activity.</text>
</comment>
<comment type="subcellular location">
    <subcellularLocation>
        <location evidence="1">Cytoplasm</location>
    </subcellularLocation>
</comment>
<comment type="similarity">
    <text evidence="1">Belongs to the RecX family.</text>
</comment>